<accession>B8ZLH1</accession>
<name>RNH3_STRPJ</name>
<keyword id="KW-0963">Cytoplasm</keyword>
<keyword id="KW-0255">Endonuclease</keyword>
<keyword id="KW-0378">Hydrolase</keyword>
<keyword id="KW-0460">Magnesium</keyword>
<keyword id="KW-0479">Metal-binding</keyword>
<keyword id="KW-0540">Nuclease</keyword>
<comment type="function">
    <text evidence="1">Endonuclease that specifically degrades the RNA of RNA-DNA hybrids.</text>
</comment>
<comment type="catalytic activity">
    <reaction evidence="1">
        <text>Endonucleolytic cleavage to 5'-phosphomonoester.</text>
        <dbReference type="EC" id="3.1.26.4"/>
    </reaction>
</comment>
<comment type="cofactor">
    <cofactor evidence="1">
        <name>Mn(2+)</name>
        <dbReference type="ChEBI" id="CHEBI:29035"/>
    </cofactor>
    <cofactor evidence="1">
        <name>Mg(2+)</name>
        <dbReference type="ChEBI" id="CHEBI:18420"/>
    </cofactor>
    <text evidence="1">Manganese or magnesium. Binds 1 divalent metal ion per monomer in the absence of substrate. May bind a second metal ion after substrate binding.</text>
</comment>
<comment type="subcellular location">
    <subcellularLocation>
        <location evidence="1">Cytoplasm</location>
    </subcellularLocation>
</comment>
<comment type="similarity">
    <text evidence="1">Belongs to the RNase HII family. RnhC subfamily.</text>
</comment>
<feature type="chain" id="PRO_1000117704" description="Ribonuclease HIII">
    <location>
        <begin position="1"/>
        <end position="290"/>
    </location>
</feature>
<feature type="domain" description="RNase H type-2" evidence="2">
    <location>
        <begin position="78"/>
        <end position="290"/>
    </location>
</feature>
<feature type="binding site" evidence="1">
    <location>
        <position position="84"/>
    </location>
    <ligand>
        <name>a divalent metal cation</name>
        <dbReference type="ChEBI" id="CHEBI:60240"/>
    </ligand>
</feature>
<feature type="binding site" evidence="1">
    <location>
        <position position="85"/>
    </location>
    <ligand>
        <name>a divalent metal cation</name>
        <dbReference type="ChEBI" id="CHEBI:60240"/>
    </ligand>
</feature>
<feature type="binding site" evidence="1">
    <location>
        <position position="187"/>
    </location>
    <ligand>
        <name>a divalent metal cation</name>
        <dbReference type="ChEBI" id="CHEBI:60240"/>
    </ligand>
</feature>
<dbReference type="EC" id="3.1.26.4" evidence="1"/>
<dbReference type="EMBL" id="FM211187">
    <property type="protein sequence ID" value="CAR68229.1"/>
    <property type="molecule type" value="Genomic_DNA"/>
</dbReference>
<dbReference type="RefSeq" id="WP_000146861.1">
    <property type="nucleotide sequence ID" value="NC_011900.1"/>
</dbReference>
<dbReference type="SMR" id="B8ZLH1"/>
<dbReference type="KEGG" id="sne:SPN23F03800"/>
<dbReference type="HOGENOM" id="CLU_059546_1_0_9"/>
<dbReference type="GO" id="GO:0005737">
    <property type="term" value="C:cytoplasm"/>
    <property type="evidence" value="ECO:0007669"/>
    <property type="project" value="UniProtKB-SubCell"/>
</dbReference>
<dbReference type="GO" id="GO:0032299">
    <property type="term" value="C:ribonuclease H2 complex"/>
    <property type="evidence" value="ECO:0007669"/>
    <property type="project" value="TreeGrafter"/>
</dbReference>
<dbReference type="GO" id="GO:0000287">
    <property type="term" value="F:magnesium ion binding"/>
    <property type="evidence" value="ECO:0007669"/>
    <property type="project" value="UniProtKB-UniRule"/>
</dbReference>
<dbReference type="GO" id="GO:0003723">
    <property type="term" value="F:RNA binding"/>
    <property type="evidence" value="ECO:0007669"/>
    <property type="project" value="InterPro"/>
</dbReference>
<dbReference type="GO" id="GO:0004523">
    <property type="term" value="F:RNA-DNA hybrid ribonuclease activity"/>
    <property type="evidence" value="ECO:0007669"/>
    <property type="project" value="UniProtKB-UniRule"/>
</dbReference>
<dbReference type="GO" id="GO:0043137">
    <property type="term" value="P:DNA replication, removal of RNA primer"/>
    <property type="evidence" value="ECO:0007669"/>
    <property type="project" value="TreeGrafter"/>
</dbReference>
<dbReference type="GO" id="GO:0006298">
    <property type="term" value="P:mismatch repair"/>
    <property type="evidence" value="ECO:0007669"/>
    <property type="project" value="TreeGrafter"/>
</dbReference>
<dbReference type="CDD" id="cd06590">
    <property type="entry name" value="RNase_HII_bacteria_HIII_like"/>
    <property type="match status" value="1"/>
</dbReference>
<dbReference type="CDD" id="cd14796">
    <property type="entry name" value="RNAse_HIII_N"/>
    <property type="match status" value="1"/>
</dbReference>
<dbReference type="FunFam" id="3.30.420.10:FF:000047">
    <property type="entry name" value="Ribonuclease HIII"/>
    <property type="match status" value="1"/>
</dbReference>
<dbReference type="Gene3D" id="3.30.420.10">
    <property type="entry name" value="Ribonuclease H-like superfamily/Ribonuclease H"/>
    <property type="match status" value="1"/>
</dbReference>
<dbReference type="Gene3D" id="3.30.310.10">
    <property type="entry name" value="TATA-Binding Protein"/>
    <property type="match status" value="1"/>
</dbReference>
<dbReference type="HAMAP" id="MF_00053">
    <property type="entry name" value="RNase_HIII"/>
    <property type="match status" value="1"/>
</dbReference>
<dbReference type="InterPro" id="IPR001352">
    <property type="entry name" value="RNase_HII/HIII"/>
</dbReference>
<dbReference type="InterPro" id="IPR024567">
    <property type="entry name" value="RNase_HII/HIII_dom"/>
</dbReference>
<dbReference type="InterPro" id="IPR004641">
    <property type="entry name" value="RNase_HIII"/>
</dbReference>
<dbReference type="InterPro" id="IPR024568">
    <property type="entry name" value="RNase_HIII_N"/>
</dbReference>
<dbReference type="InterPro" id="IPR012337">
    <property type="entry name" value="RNaseH-like_sf"/>
</dbReference>
<dbReference type="InterPro" id="IPR036397">
    <property type="entry name" value="RNaseH_sf"/>
</dbReference>
<dbReference type="InterPro" id="IPR012295">
    <property type="entry name" value="TBP_dom_sf"/>
</dbReference>
<dbReference type="NCBIfam" id="TIGR00716">
    <property type="entry name" value="rnhC"/>
    <property type="match status" value="1"/>
</dbReference>
<dbReference type="PANTHER" id="PTHR10954:SF23">
    <property type="entry name" value="RIBONUCLEASE"/>
    <property type="match status" value="1"/>
</dbReference>
<dbReference type="PANTHER" id="PTHR10954">
    <property type="entry name" value="RIBONUCLEASE H2 SUBUNIT A"/>
    <property type="match status" value="1"/>
</dbReference>
<dbReference type="Pfam" id="PF11858">
    <property type="entry name" value="DUF3378"/>
    <property type="match status" value="1"/>
</dbReference>
<dbReference type="Pfam" id="PF01351">
    <property type="entry name" value="RNase_HII"/>
    <property type="match status" value="1"/>
</dbReference>
<dbReference type="PIRSF" id="PIRSF037748">
    <property type="entry name" value="RnhC"/>
    <property type="match status" value="1"/>
</dbReference>
<dbReference type="SUPFAM" id="SSF53098">
    <property type="entry name" value="Ribonuclease H-like"/>
    <property type="match status" value="1"/>
</dbReference>
<dbReference type="PROSITE" id="PS51975">
    <property type="entry name" value="RNASE_H_2"/>
    <property type="match status" value="1"/>
</dbReference>
<protein>
    <recommendedName>
        <fullName evidence="1">Ribonuclease HIII</fullName>
        <shortName evidence="1">RNase HIII</shortName>
        <ecNumber evidence="1">3.1.26.4</ecNumber>
    </recommendedName>
</protein>
<gene>
    <name evidence="1" type="primary">rnhC</name>
    <name type="ordered locus">SPN23F03800</name>
</gene>
<organism>
    <name type="scientific">Streptococcus pneumoniae (strain ATCC 700669 / Spain 23F-1)</name>
    <dbReference type="NCBI Taxonomy" id="561276"/>
    <lineage>
        <taxon>Bacteria</taxon>
        <taxon>Bacillati</taxon>
        <taxon>Bacillota</taxon>
        <taxon>Bacilli</taxon>
        <taxon>Lactobacillales</taxon>
        <taxon>Streptococcaceae</taxon>
        <taxon>Streptococcus</taxon>
    </lineage>
</organism>
<reference key="1">
    <citation type="journal article" date="2009" name="J. Bacteriol.">
        <title>Role of conjugative elements in the evolution of the multidrug-resistant pandemic clone Streptococcus pneumoniae Spain23F ST81.</title>
        <authorList>
            <person name="Croucher N.J."/>
            <person name="Walker D."/>
            <person name="Romero P."/>
            <person name="Lennard N."/>
            <person name="Paterson G.K."/>
            <person name="Bason N.C."/>
            <person name="Mitchell A.M."/>
            <person name="Quail M.A."/>
            <person name="Andrew P.W."/>
            <person name="Parkhill J."/>
            <person name="Bentley S.D."/>
            <person name="Mitchell T.J."/>
        </authorList>
    </citation>
    <scope>NUCLEOTIDE SEQUENCE [LARGE SCALE GENOMIC DNA]</scope>
    <source>
        <strain>ATCC 700669 / Spain 23F-1</strain>
    </source>
</reference>
<proteinExistence type="inferred from homology"/>
<evidence type="ECO:0000255" key="1">
    <source>
        <dbReference type="HAMAP-Rule" id="MF_00053"/>
    </source>
</evidence>
<evidence type="ECO:0000255" key="2">
    <source>
        <dbReference type="PROSITE-ProRule" id="PRU01319"/>
    </source>
</evidence>
<sequence length="290" mass="31860">MASITLTPSEKDIQAFLEHYQTSLAPSKNPYIRYFLKLPQATVSIYTSGKILLQGEGAEKYASFFGYQAVEQTSGQNLPLIGTDEVGNGSYFGGLAVVAAFVTPDQHDFLRKLGVGDSKTLTDQKIRQIAPILKEKIQHQALLLSPSKYNEVIGDRYNAVSVKVALHNQAIYLLLQKGVQPEKIVIDAFTSAKNYDKYLAQETNRFSNPISLEEKAEGKYLAVAVSSVIARDLFLENLENLGRELGYQLPSGAGTASDKVASQILQAYGMQGLNFCAKLHFKNTEKAKNA</sequence>